<organism>
    <name type="scientific">Dechloromonas aromatica (strain RCB)</name>
    <dbReference type="NCBI Taxonomy" id="159087"/>
    <lineage>
        <taxon>Bacteria</taxon>
        <taxon>Pseudomonadati</taxon>
        <taxon>Pseudomonadota</taxon>
        <taxon>Betaproteobacteria</taxon>
        <taxon>Rhodocyclales</taxon>
        <taxon>Azonexaceae</taxon>
        <taxon>Dechloromonas</taxon>
    </lineage>
</organism>
<comment type="function">
    <text evidence="1">Part of the twin-arginine translocation (Tat) system that transports large folded proteins containing a characteristic twin-arginine motif in their signal peptide across membranes. TatA could form the protein-conducting channel of the Tat system.</text>
</comment>
<comment type="subunit">
    <text evidence="1">The Tat system comprises two distinct complexes: a TatABC complex, containing multiple copies of TatA, TatB and TatC subunits, and a separate TatA complex, containing only TatA subunits. Substrates initially bind to the TatABC complex, which probably triggers association of the separate TatA complex to form the active translocon.</text>
</comment>
<comment type="subcellular location">
    <subcellularLocation>
        <location evidence="1">Cell inner membrane</location>
        <topology evidence="1">Single-pass membrane protein</topology>
    </subcellularLocation>
</comment>
<comment type="similarity">
    <text evidence="1">Belongs to the TatA/E family.</text>
</comment>
<gene>
    <name evidence="1" type="primary">tatA</name>
    <name type="ordered locus">Daro_3375</name>
</gene>
<sequence>MGSFSIWHWLIVLVIVMLIFGTKKLRNVGQDLGGAVKGFKDGMKEANADKPAEEAQPTQQVGGHTIDVEVKEKTKS</sequence>
<reference key="1">
    <citation type="journal article" date="2009" name="BMC Genomics">
        <title>Metabolic analysis of the soil microbe Dechloromonas aromatica str. RCB: indications of a surprisingly complex life-style and cryptic anaerobic pathways for aromatic degradation.</title>
        <authorList>
            <person name="Salinero K.K."/>
            <person name="Keller K."/>
            <person name="Feil W.S."/>
            <person name="Feil H."/>
            <person name="Trong S."/>
            <person name="Di Bartolo G."/>
            <person name="Lapidus A."/>
        </authorList>
    </citation>
    <scope>NUCLEOTIDE SEQUENCE [LARGE SCALE GENOMIC DNA]</scope>
    <source>
        <strain>RCB</strain>
    </source>
</reference>
<accession>Q47AM7</accession>
<name>TATA_DECAR</name>
<protein>
    <recommendedName>
        <fullName evidence="1">Sec-independent protein translocase protein TatA</fullName>
    </recommendedName>
</protein>
<proteinExistence type="inferred from homology"/>
<keyword id="KW-0997">Cell inner membrane</keyword>
<keyword id="KW-1003">Cell membrane</keyword>
<keyword id="KW-0472">Membrane</keyword>
<keyword id="KW-0653">Protein transport</keyword>
<keyword id="KW-0811">Translocation</keyword>
<keyword id="KW-0812">Transmembrane</keyword>
<keyword id="KW-1133">Transmembrane helix</keyword>
<keyword id="KW-0813">Transport</keyword>
<feature type="chain" id="PRO_1000044382" description="Sec-independent protein translocase protein TatA">
    <location>
        <begin position="1"/>
        <end position="76"/>
    </location>
</feature>
<feature type="transmembrane region" description="Helical" evidence="1">
    <location>
        <begin position="1"/>
        <end position="21"/>
    </location>
</feature>
<feature type="region of interest" description="Disordered" evidence="2">
    <location>
        <begin position="47"/>
        <end position="76"/>
    </location>
</feature>
<feature type="compositionally biased region" description="Basic and acidic residues" evidence="2">
    <location>
        <begin position="66"/>
        <end position="76"/>
    </location>
</feature>
<evidence type="ECO:0000255" key="1">
    <source>
        <dbReference type="HAMAP-Rule" id="MF_00236"/>
    </source>
</evidence>
<evidence type="ECO:0000256" key="2">
    <source>
        <dbReference type="SAM" id="MobiDB-lite"/>
    </source>
</evidence>
<dbReference type="EMBL" id="CP000089">
    <property type="protein sequence ID" value="AAZ48104.1"/>
    <property type="molecule type" value="Genomic_DNA"/>
</dbReference>
<dbReference type="SMR" id="Q47AM7"/>
<dbReference type="STRING" id="159087.Daro_3375"/>
<dbReference type="KEGG" id="dar:Daro_3375"/>
<dbReference type="eggNOG" id="COG1826">
    <property type="taxonomic scope" value="Bacteria"/>
</dbReference>
<dbReference type="HOGENOM" id="CLU_086034_5_3_4"/>
<dbReference type="OrthoDB" id="7066617at2"/>
<dbReference type="GO" id="GO:0033281">
    <property type="term" value="C:TAT protein transport complex"/>
    <property type="evidence" value="ECO:0007669"/>
    <property type="project" value="UniProtKB-UniRule"/>
</dbReference>
<dbReference type="GO" id="GO:0008320">
    <property type="term" value="F:protein transmembrane transporter activity"/>
    <property type="evidence" value="ECO:0007669"/>
    <property type="project" value="UniProtKB-UniRule"/>
</dbReference>
<dbReference type="GO" id="GO:0043953">
    <property type="term" value="P:protein transport by the Tat complex"/>
    <property type="evidence" value="ECO:0007669"/>
    <property type="project" value="UniProtKB-UniRule"/>
</dbReference>
<dbReference type="Gene3D" id="1.20.5.3310">
    <property type="match status" value="1"/>
</dbReference>
<dbReference type="HAMAP" id="MF_00236">
    <property type="entry name" value="TatA_E"/>
    <property type="match status" value="1"/>
</dbReference>
<dbReference type="InterPro" id="IPR003369">
    <property type="entry name" value="TatA/B/E"/>
</dbReference>
<dbReference type="InterPro" id="IPR006312">
    <property type="entry name" value="TatA/E"/>
</dbReference>
<dbReference type="NCBIfam" id="NF002813">
    <property type="entry name" value="PRK02958.1"/>
    <property type="match status" value="1"/>
</dbReference>
<dbReference type="NCBIfam" id="TIGR01411">
    <property type="entry name" value="tatAE"/>
    <property type="match status" value="1"/>
</dbReference>
<dbReference type="PANTHER" id="PTHR42982">
    <property type="entry name" value="SEC-INDEPENDENT PROTEIN TRANSLOCASE PROTEIN TATA"/>
    <property type="match status" value="1"/>
</dbReference>
<dbReference type="PANTHER" id="PTHR42982:SF1">
    <property type="entry name" value="SEC-INDEPENDENT PROTEIN TRANSLOCASE PROTEIN TATA"/>
    <property type="match status" value="1"/>
</dbReference>
<dbReference type="Pfam" id="PF02416">
    <property type="entry name" value="TatA_B_E"/>
    <property type="match status" value="1"/>
</dbReference>